<accession>Q8D8P4</accession>
<sequence>MANTLYDRTIAFAGMCQAVALVQQIARNGHCDQDAFETSIKAILNTNPANTLDVFGNESQLKLGLECLVKGIDSTPTGSEVTRYLISLMALERKLMGRNDAMSQLGDRIQMVQRQTEHYDLFEEQMISNVASIYLDVISPIGPRIQVTGTPTVLQQTSNQHKVRALLLSGIRSAVLWRQVGGRRRHLIFGRKKMVEQAQILLARM</sequence>
<proteinExistence type="inferred from homology"/>
<evidence type="ECO:0000255" key="1">
    <source>
        <dbReference type="HAMAP-Rule" id="MF_00695"/>
    </source>
</evidence>
<dbReference type="EMBL" id="AE016795">
    <property type="protein sequence ID" value="AAO11259.1"/>
    <property type="molecule type" value="Genomic_DNA"/>
</dbReference>
<dbReference type="RefSeq" id="WP_011080746.1">
    <property type="nucleotide sequence ID" value="NC_004459.3"/>
</dbReference>
<dbReference type="SMR" id="Q8D8P4"/>
<dbReference type="GeneID" id="93894159"/>
<dbReference type="KEGG" id="vvu:VV1_2927"/>
<dbReference type="HOGENOM" id="CLU_098920_0_0_6"/>
<dbReference type="Proteomes" id="UP000002275">
    <property type="component" value="Chromosome 1"/>
</dbReference>
<dbReference type="GO" id="GO:0005737">
    <property type="term" value="C:cytoplasm"/>
    <property type="evidence" value="ECO:0007669"/>
    <property type="project" value="UniProtKB-SubCell"/>
</dbReference>
<dbReference type="GO" id="GO:0005886">
    <property type="term" value="C:plasma membrane"/>
    <property type="evidence" value="ECO:0007669"/>
    <property type="project" value="UniProtKB-SubCell"/>
</dbReference>
<dbReference type="Gene3D" id="1.10.3890.10">
    <property type="entry name" value="HflD-like"/>
    <property type="match status" value="1"/>
</dbReference>
<dbReference type="HAMAP" id="MF_00695">
    <property type="entry name" value="HflD_protein"/>
    <property type="match status" value="1"/>
</dbReference>
<dbReference type="InterPro" id="IPR007451">
    <property type="entry name" value="HflD"/>
</dbReference>
<dbReference type="InterPro" id="IPR035932">
    <property type="entry name" value="HflD-like_sf"/>
</dbReference>
<dbReference type="NCBIfam" id="NF001246">
    <property type="entry name" value="PRK00218.1-2"/>
    <property type="match status" value="1"/>
</dbReference>
<dbReference type="NCBIfam" id="NF001248">
    <property type="entry name" value="PRK00218.1-4"/>
    <property type="match status" value="1"/>
</dbReference>
<dbReference type="PANTHER" id="PTHR38100">
    <property type="entry name" value="HIGH FREQUENCY LYSOGENIZATION PROTEIN HFLD"/>
    <property type="match status" value="1"/>
</dbReference>
<dbReference type="PANTHER" id="PTHR38100:SF1">
    <property type="entry name" value="HIGH FREQUENCY LYSOGENIZATION PROTEIN HFLD"/>
    <property type="match status" value="1"/>
</dbReference>
<dbReference type="Pfam" id="PF04356">
    <property type="entry name" value="DUF489"/>
    <property type="match status" value="1"/>
</dbReference>
<dbReference type="SUPFAM" id="SSF101322">
    <property type="entry name" value="YcfC-like"/>
    <property type="match status" value="1"/>
</dbReference>
<organism>
    <name type="scientific">Vibrio vulnificus (strain CMCP6)</name>
    <dbReference type="NCBI Taxonomy" id="216895"/>
    <lineage>
        <taxon>Bacteria</taxon>
        <taxon>Pseudomonadati</taxon>
        <taxon>Pseudomonadota</taxon>
        <taxon>Gammaproteobacteria</taxon>
        <taxon>Vibrionales</taxon>
        <taxon>Vibrionaceae</taxon>
        <taxon>Vibrio</taxon>
    </lineage>
</organism>
<name>HFLD_VIBVU</name>
<feature type="chain" id="PRO_0000071592" description="High frequency lysogenization protein HflD homolog">
    <location>
        <begin position="1"/>
        <end position="205"/>
    </location>
</feature>
<comment type="subcellular location">
    <subcellularLocation>
        <location>Cytoplasm</location>
    </subcellularLocation>
    <subcellularLocation>
        <location evidence="1">Cell inner membrane</location>
        <topology evidence="1">Peripheral membrane protein</topology>
        <orientation evidence="1">Cytoplasmic side</orientation>
    </subcellularLocation>
</comment>
<comment type="similarity">
    <text evidence="1">Belongs to the HflD family.</text>
</comment>
<protein>
    <recommendedName>
        <fullName evidence="1">High frequency lysogenization protein HflD homolog</fullName>
    </recommendedName>
</protein>
<reference key="1">
    <citation type="submission" date="2002-12" db="EMBL/GenBank/DDBJ databases">
        <title>Complete genome sequence of Vibrio vulnificus CMCP6.</title>
        <authorList>
            <person name="Rhee J.H."/>
            <person name="Kim S.Y."/>
            <person name="Chung S.S."/>
            <person name="Kim J.J."/>
            <person name="Moon Y.H."/>
            <person name="Jeong H."/>
            <person name="Choy H.E."/>
        </authorList>
    </citation>
    <scope>NUCLEOTIDE SEQUENCE [LARGE SCALE GENOMIC DNA]</scope>
    <source>
        <strain>CMCP6</strain>
    </source>
</reference>
<gene>
    <name evidence="1" type="primary">hflD</name>
    <name type="ordered locus">VV1_2927</name>
</gene>
<keyword id="KW-0997">Cell inner membrane</keyword>
<keyword id="KW-1003">Cell membrane</keyword>
<keyword id="KW-0963">Cytoplasm</keyword>
<keyword id="KW-0472">Membrane</keyword>